<keyword id="KW-0963">Cytoplasm</keyword>
<keyword id="KW-0227">DNA damage</keyword>
<keyword id="KW-0234">DNA repair</keyword>
<keyword id="KW-0235">DNA replication</keyword>
<keyword id="KW-0238">DNA-binding</keyword>
<keyword id="KW-0239">DNA-directed DNA polymerase</keyword>
<keyword id="KW-0460">Magnesium</keyword>
<keyword id="KW-0479">Metal-binding</keyword>
<keyword id="KW-0515">Mutator protein</keyword>
<keyword id="KW-0548">Nucleotidyltransferase</keyword>
<keyword id="KW-0808">Transferase</keyword>
<reference key="1">
    <citation type="journal article" date="2005" name="J. Bacteriol.">
        <title>Whole-genome sequence analysis of Pseudomonas syringae pv. phaseolicola 1448A reveals divergence among pathovars in genes involved in virulence and transposition.</title>
        <authorList>
            <person name="Joardar V."/>
            <person name="Lindeberg M."/>
            <person name="Jackson R.W."/>
            <person name="Selengut J."/>
            <person name="Dodson R."/>
            <person name="Brinkac L.M."/>
            <person name="Daugherty S.C."/>
            <person name="DeBoy R.T."/>
            <person name="Durkin A.S."/>
            <person name="Gwinn Giglio M."/>
            <person name="Madupu R."/>
            <person name="Nelson W.C."/>
            <person name="Rosovitz M.J."/>
            <person name="Sullivan S.A."/>
            <person name="Crabtree J."/>
            <person name="Creasy T."/>
            <person name="Davidsen T.M."/>
            <person name="Haft D.H."/>
            <person name="Zafar N."/>
            <person name="Zhou L."/>
            <person name="Halpin R."/>
            <person name="Holley T."/>
            <person name="Khouri H.M."/>
            <person name="Feldblyum T.V."/>
            <person name="White O."/>
            <person name="Fraser C.M."/>
            <person name="Chatterjee A.K."/>
            <person name="Cartinhour S."/>
            <person name="Schneider D."/>
            <person name="Mansfield J.W."/>
            <person name="Collmer A."/>
            <person name="Buell R."/>
        </authorList>
    </citation>
    <scope>NUCLEOTIDE SEQUENCE [LARGE SCALE GENOMIC DNA]</scope>
    <source>
        <strain>1448A / Race 6</strain>
    </source>
</reference>
<feature type="chain" id="PRO_1000084909" description="DNA polymerase IV">
    <location>
        <begin position="1"/>
        <end position="353"/>
    </location>
</feature>
<feature type="domain" description="UmuC" evidence="1">
    <location>
        <begin position="6"/>
        <end position="187"/>
    </location>
</feature>
<feature type="active site" evidence="1">
    <location>
        <position position="106"/>
    </location>
</feature>
<feature type="binding site" evidence="1">
    <location>
        <position position="10"/>
    </location>
    <ligand>
        <name>Mg(2+)</name>
        <dbReference type="ChEBI" id="CHEBI:18420"/>
    </ligand>
</feature>
<feature type="binding site" evidence="1">
    <location>
        <position position="105"/>
    </location>
    <ligand>
        <name>Mg(2+)</name>
        <dbReference type="ChEBI" id="CHEBI:18420"/>
    </ligand>
</feature>
<feature type="site" description="Substrate discrimination" evidence="1">
    <location>
        <position position="15"/>
    </location>
</feature>
<accession>Q48FB2</accession>
<dbReference type="EC" id="2.7.7.7" evidence="1"/>
<dbReference type="EMBL" id="CP000058">
    <property type="protein sequence ID" value="AAZ33646.1"/>
    <property type="molecule type" value="Genomic_DNA"/>
</dbReference>
<dbReference type="RefSeq" id="WP_002554670.1">
    <property type="nucleotide sequence ID" value="NC_005773.3"/>
</dbReference>
<dbReference type="SMR" id="Q48FB2"/>
<dbReference type="KEGG" id="psp:PSPPH_3785"/>
<dbReference type="eggNOG" id="COG0389">
    <property type="taxonomic scope" value="Bacteria"/>
</dbReference>
<dbReference type="HOGENOM" id="CLU_012348_1_2_6"/>
<dbReference type="Proteomes" id="UP000000551">
    <property type="component" value="Chromosome"/>
</dbReference>
<dbReference type="GO" id="GO:0005829">
    <property type="term" value="C:cytosol"/>
    <property type="evidence" value="ECO:0007669"/>
    <property type="project" value="TreeGrafter"/>
</dbReference>
<dbReference type="GO" id="GO:0003684">
    <property type="term" value="F:damaged DNA binding"/>
    <property type="evidence" value="ECO:0007669"/>
    <property type="project" value="InterPro"/>
</dbReference>
<dbReference type="GO" id="GO:0003887">
    <property type="term" value="F:DNA-directed DNA polymerase activity"/>
    <property type="evidence" value="ECO:0007669"/>
    <property type="project" value="UniProtKB-UniRule"/>
</dbReference>
<dbReference type="GO" id="GO:0000287">
    <property type="term" value="F:magnesium ion binding"/>
    <property type="evidence" value="ECO:0007669"/>
    <property type="project" value="UniProtKB-UniRule"/>
</dbReference>
<dbReference type="GO" id="GO:0006261">
    <property type="term" value="P:DNA-templated DNA replication"/>
    <property type="evidence" value="ECO:0007669"/>
    <property type="project" value="UniProtKB-UniRule"/>
</dbReference>
<dbReference type="GO" id="GO:0042276">
    <property type="term" value="P:error-prone translesion synthesis"/>
    <property type="evidence" value="ECO:0007669"/>
    <property type="project" value="TreeGrafter"/>
</dbReference>
<dbReference type="GO" id="GO:0009432">
    <property type="term" value="P:SOS response"/>
    <property type="evidence" value="ECO:0007669"/>
    <property type="project" value="TreeGrafter"/>
</dbReference>
<dbReference type="CDD" id="cd03586">
    <property type="entry name" value="PolY_Pol_IV_kappa"/>
    <property type="match status" value="1"/>
</dbReference>
<dbReference type="FunFam" id="1.10.150.20:FF:000019">
    <property type="entry name" value="DNA polymerase IV"/>
    <property type="match status" value="1"/>
</dbReference>
<dbReference type="FunFam" id="3.30.70.270:FF:000002">
    <property type="entry name" value="DNA polymerase IV"/>
    <property type="match status" value="1"/>
</dbReference>
<dbReference type="FunFam" id="3.40.1170.60:FF:000001">
    <property type="entry name" value="DNA polymerase IV"/>
    <property type="match status" value="1"/>
</dbReference>
<dbReference type="Gene3D" id="3.30.70.270">
    <property type="match status" value="1"/>
</dbReference>
<dbReference type="Gene3D" id="3.40.1170.60">
    <property type="match status" value="1"/>
</dbReference>
<dbReference type="Gene3D" id="1.10.150.20">
    <property type="entry name" value="5' to 3' exonuclease, C-terminal subdomain"/>
    <property type="match status" value="1"/>
</dbReference>
<dbReference type="Gene3D" id="3.30.1490.100">
    <property type="entry name" value="DNA polymerase, Y-family, little finger domain"/>
    <property type="match status" value="1"/>
</dbReference>
<dbReference type="HAMAP" id="MF_01113">
    <property type="entry name" value="DNApol_IV"/>
    <property type="match status" value="1"/>
</dbReference>
<dbReference type="InterPro" id="IPR043502">
    <property type="entry name" value="DNA/RNA_pol_sf"/>
</dbReference>
<dbReference type="InterPro" id="IPR036775">
    <property type="entry name" value="DNA_pol_Y-fam_lit_finger_sf"/>
</dbReference>
<dbReference type="InterPro" id="IPR017961">
    <property type="entry name" value="DNA_pol_Y-fam_little_finger"/>
</dbReference>
<dbReference type="InterPro" id="IPR050116">
    <property type="entry name" value="DNA_polymerase-Y"/>
</dbReference>
<dbReference type="InterPro" id="IPR022880">
    <property type="entry name" value="DNApol_IV"/>
</dbReference>
<dbReference type="InterPro" id="IPR024728">
    <property type="entry name" value="PolY_HhH_motif"/>
</dbReference>
<dbReference type="InterPro" id="IPR043128">
    <property type="entry name" value="Rev_trsase/Diguanyl_cyclase"/>
</dbReference>
<dbReference type="InterPro" id="IPR001126">
    <property type="entry name" value="UmuC"/>
</dbReference>
<dbReference type="NCBIfam" id="NF002677">
    <property type="entry name" value="PRK02406.1"/>
    <property type="match status" value="1"/>
</dbReference>
<dbReference type="PANTHER" id="PTHR11076:SF33">
    <property type="entry name" value="DNA POLYMERASE KAPPA"/>
    <property type="match status" value="1"/>
</dbReference>
<dbReference type="PANTHER" id="PTHR11076">
    <property type="entry name" value="DNA REPAIR POLYMERASE UMUC / TRANSFERASE FAMILY MEMBER"/>
    <property type="match status" value="1"/>
</dbReference>
<dbReference type="Pfam" id="PF00817">
    <property type="entry name" value="IMS"/>
    <property type="match status" value="1"/>
</dbReference>
<dbReference type="Pfam" id="PF11799">
    <property type="entry name" value="IMS_C"/>
    <property type="match status" value="1"/>
</dbReference>
<dbReference type="Pfam" id="PF11798">
    <property type="entry name" value="IMS_HHH"/>
    <property type="match status" value="1"/>
</dbReference>
<dbReference type="SUPFAM" id="SSF56672">
    <property type="entry name" value="DNA/RNA polymerases"/>
    <property type="match status" value="1"/>
</dbReference>
<dbReference type="SUPFAM" id="SSF100879">
    <property type="entry name" value="Lesion bypass DNA polymerase (Y-family), little finger domain"/>
    <property type="match status" value="1"/>
</dbReference>
<dbReference type="PROSITE" id="PS50173">
    <property type="entry name" value="UMUC"/>
    <property type="match status" value="1"/>
</dbReference>
<proteinExistence type="inferred from homology"/>
<comment type="function">
    <text evidence="1">Poorly processive, error-prone DNA polymerase involved in untargeted mutagenesis. Copies undamaged DNA at stalled replication forks, which arise in vivo from mismatched or misaligned primer ends. These misaligned primers can be extended by PolIV. Exhibits no 3'-5' exonuclease (proofreading) activity. May be involved in translesional synthesis, in conjunction with the beta clamp from PolIII.</text>
</comment>
<comment type="catalytic activity">
    <reaction evidence="1">
        <text>DNA(n) + a 2'-deoxyribonucleoside 5'-triphosphate = DNA(n+1) + diphosphate</text>
        <dbReference type="Rhea" id="RHEA:22508"/>
        <dbReference type="Rhea" id="RHEA-COMP:17339"/>
        <dbReference type="Rhea" id="RHEA-COMP:17340"/>
        <dbReference type="ChEBI" id="CHEBI:33019"/>
        <dbReference type="ChEBI" id="CHEBI:61560"/>
        <dbReference type="ChEBI" id="CHEBI:173112"/>
        <dbReference type="EC" id="2.7.7.7"/>
    </reaction>
</comment>
<comment type="cofactor">
    <cofactor evidence="1">
        <name>Mg(2+)</name>
        <dbReference type="ChEBI" id="CHEBI:18420"/>
    </cofactor>
    <text evidence="1">Binds 2 magnesium ions per subunit.</text>
</comment>
<comment type="subunit">
    <text evidence="1">Monomer.</text>
</comment>
<comment type="subcellular location">
    <subcellularLocation>
        <location evidence="1">Cytoplasm</location>
    </subcellularLocation>
</comment>
<comment type="similarity">
    <text evidence="1">Belongs to the DNA polymerase type-Y family.</text>
</comment>
<protein>
    <recommendedName>
        <fullName evidence="1">DNA polymerase IV</fullName>
        <shortName evidence="1">Pol IV</shortName>
        <ecNumber evidence="1">2.7.7.7</ecNumber>
    </recommendedName>
</protein>
<gene>
    <name evidence="1" type="primary">dinB</name>
    <name type="ordered locus">PSPPH_3785</name>
</gene>
<organism>
    <name type="scientific">Pseudomonas savastanoi pv. phaseolicola (strain 1448A / Race 6)</name>
    <name type="common">Pseudomonas syringae pv. phaseolicola (strain 1448A / Race 6)</name>
    <dbReference type="NCBI Taxonomy" id="264730"/>
    <lineage>
        <taxon>Bacteria</taxon>
        <taxon>Pseudomonadati</taxon>
        <taxon>Pseudomonadota</taxon>
        <taxon>Gammaproteobacteria</taxon>
        <taxon>Pseudomonadales</taxon>
        <taxon>Pseudomonadaceae</taxon>
        <taxon>Pseudomonas</taxon>
    </lineage>
</organism>
<name>DPO4_PSE14</name>
<evidence type="ECO:0000255" key="1">
    <source>
        <dbReference type="HAMAP-Rule" id="MF_01113"/>
    </source>
</evidence>
<sequence>MTQRKIIHIDCDCFYAAIEMRDEPELAGKPLAVGGSAERRGVIATCNYEARAYGVRSAMSSRHALKLCPDLTIVKPRMEAYKEASREIHTIFRDYTDLIEPLSLDEAFLDVSDAGHFSGSATRIAQDIRRRVSNQLHITVSAGVAPNKFLAKIASDWKKPNGLFVITPDQVEDFVASLPVTKLHGVGKVTADKLGRLGIVDCADLRGRSKLALVREFGSFGERLWSLAHGIDDRPVQNDSRRQSVSVENTYDTDLPDLAACLEKLPALLETLGNRMARMEGQYRPGKPFVKVKFHDFTQTTLEQSGAGRDLGSYEQLLAQAFARGAKPVRLLGIGVRLHDLRAAHEQLELFSQ</sequence>